<sequence>MASYSQFLTKAQEDELRSIANAIVTPGKGILAADESTGSMDKRLNSIGLENTEENRRKYRQLLFTAGADLNKYISGVIMFHETFYQKTDDGKPFTALLQEQGIIPGIKVDKGVVPMAGTIGEGTTQGLDDLNARCAQYKKDGAQFAKWRCVHKISSTTPSVTALKEIASNLGSRYASICQQNGLVPIVEPEILPDGEHCLARGQKITETVLSYVYHALNEHHVFLEGTLLKPNMVTSGQSFTGEKPSNADIGLATVTALQRGVPSAVPGVVFLSGGQSEEDATLNLNAINQVSGKKPWALTFSYGRALQASCLAKWAGKDENIAAAQEVLLHRAQVNSLASVGKYTGDASADAAASQSLFVANHSY</sequence>
<keyword id="KW-0324">Glycolysis</keyword>
<keyword id="KW-0456">Lyase</keyword>
<keyword id="KW-1185">Reference proteome</keyword>
<keyword id="KW-0704">Schiff base</keyword>
<evidence type="ECO:0000250" key="1"/>
<evidence type="ECO:0000269" key="2">
    <source>
    </source>
</evidence>
<evidence type="ECO:0000303" key="3">
    <source>
    </source>
</evidence>
<evidence type="ECO:0000305" key="4"/>
<proteinExistence type="evidence at protein level"/>
<gene>
    <name type="primary">aldo-1</name>
    <name type="ORF">T05D4.1</name>
</gene>
<protein>
    <recommendedName>
        <fullName>Fructose-bisphosphate aldolase 1</fullName>
        <ecNumber evidence="2">4.1.2.13</ecNumber>
    </recommendedName>
    <alternativeName>
        <fullName>Aldolase CE-1</fullName>
        <shortName evidence="3">CE-1</shortName>
    </alternativeName>
</protein>
<reference key="1">
    <citation type="journal article" date="1997" name="Arch. Biochem. Biophys.">
        <title>Caenorhabditis elegans has two isozymic forms, CE-1 and CE-2, of fructose-1,6-bisphosphate aldolase which are encoded by different genes.</title>
        <authorList>
            <person name="Inoue T."/>
            <person name="Yatsuki H."/>
            <person name="Kusakabe T."/>
            <person name="Joh K."/>
            <person name="Hori K."/>
        </authorList>
    </citation>
    <scope>NUCLEOTIDE SEQUENCE [MRNA]</scope>
    <source>
        <strain>Bristol N2</strain>
    </source>
</reference>
<reference key="2">
    <citation type="journal article" date="1998" name="Science">
        <title>Genome sequence of the nematode C. elegans: a platform for investigating biology.</title>
        <authorList>
            <consortium name="The C. elegans sequencing consortium"/>
        </authorList>
    </citation>
    <scope>NUCLEOTIDE SEQUENCE [LARGE SCALE GENOMIC DNA]</scope>
    <source>
        <strain>Bristol N2</strain>
    </source>
</reference>
<name>ALF1_CAEEL</name>
<accession>P54216</accession>
<accession>O45747</accession>
<organism>
    <name type="scientific">Caenorhabditis elegans</name>
    <dbReference type="NCBI Taxonomy" id="6239"/>
    <lineage>
        <taxon>Eukaryota</taxon>
        <taxon>Metazoa</taxon>
        <taxon>Ecdysozoa</taxon>
        <taxon>Nematoda</taxon>
        <taxon>Chromadorea</taxon>
        <taxon>Rhabditida</taxon>
        <taxon>Rhabditina</taxon>
        <taxon>Rhabditomorpha</taxon>
        <taxon>Rhabditoidea</taxon>
        <taxon>Rhabditidae</taxon>
        <taxon>Peloderinae</taxon>
        <taxon>Caenorhabditis</taxon>
    </lineage>
</organism>
<feature type="chain" id="PRO_0000216928" description="Fructose-bisphosphate aldolase 1">
    <location>
        <begin position="1"/>
        <end position="366"/>
    </location>
</feature>
<feature type="active site" description="Proton acceptor" evidence="1">
    <location>
        <position position="189"/>
    </location>
</feature>
<feature type="active site" description="Schiff-base intermediate with dihydroxyacetone-P" evidence="1">
    <location>
        <position position="231"/>
    </location>
</feature>
<feature type="binding site" evidence="1">
    <location>
        <position position="56"/>
    </location>
    <ligand>
        <name>substrate</name>
    </ligand>
</feature>
<feature type="binding site" evidence="1">
    <location>
        <position position="147"/>
    </location>
    <ligand>
        <name>substrate</name>
    </ligand>
</feature>
<feature type="site" description="Necessary for preference for fructose 1,6-bisphosphate over fructose 1-phosphate">
    <location>
        <position position="366"/>
    </location>
</feature>
<feature type="sequence conflict" description="In Ref. 2; CAB03291." evidence="4" ref="2">
    <original>GS</original>
    <variation>A</variation>
    <location>
        <begin position="172"/>
        <end position="173"/>
    </location>
</feature>
<dbReference type="EC" id="4.1.2.13" evidence="2"/>
<dbReference type="EMBL" id="D83738">
    <property type="protein sequence ID" value="BAA12091.1"/>
    <property type="molecule type" value="mRNA"/>
</dbReference>
<dbReference type="EMBL" id="Z81115">
    <property type="protein sequence ID" value="CAB03291.1"/>
    <property type="molecule type" value="Genomic_DNA"/>
</dbReference>
<dbReference type="PIR" id="T24514">
    <property type="entry name" value="T24514"/>
</dbReference>
<dbReference type="RefSeq" id="NP_741281.1">
    <property type="nucleotide sequence ID" value="NM_171235.3"/>
</dbReference>
<dbReference type="SMR" id="P54216"/>
<dbReference type="BioGRID" id="41956">
    <property type="interactions" value="34"/>
</dbReference>
<dbReference type="DIP" id="DIP-25939N"/>
<dbReference type="FunCoup" id="P54216">
    <property type="interactions" value="291"/>
</dbReference>
<dbReference type="IntAct" id="P54216">
    <property type="interactions" value="1"/>
</dbReference>
<dbReference type="STRING" id="6239.T05D4.1.2"/>
<dbReference type="iPTMnet" id="P54216"/>
<dbReference type="PaxDb" id="6239-T05D4.1.1"/>
<dbReference type="PeptideAtlas" id="P54216"/>
<dbReference type="EnsemblMetazoa" id="T05D4.1.1">
    <property type="protein sequence ID" value="T05D4.1.1"/>
    <property type="gene ID" value="WBGene00011474"/>
</dbReference>
<dbReference type="GeneID" id="176788"/>
<dbReference type="KEGG" id="cel:CELE_T05D4.1"/>
<dbReference type="UCSC" id="T05D4.1.1">
    <property type="organism name" value="c. elegans"/>
</dbReference>
<dbReference type="AGR" id="WB:WBGene00011474"/>
<dbReference type="CTD" id="176788"/>
<dbReference type="WormBase" id="T05D4.1">
    <property type="protein sequence ID" value="CE16341"/>
    <property type="gene ID" value="WBGene00011474"/>
    <property type="gene designation" value="aldo-1"/>
</dbReference>
<dbReference type="eggNOG" id="KOG1557">
    <property type="taxonomic scope" value="Eukaryota"/>
</dbReference>
<dbReference type="GeneTree" id="ENSGT00950000182987"/>
<dbReference type="HOGENOM" id="CLU_031243_0_0_1"/>
<dbReference type="InParanoid" id="P54216"/>
<dbReference type="OrthoDB" id="36455at2759"/>
<dbReference type="PhylomeDB" id="P54216"/>
<dbReference type="Reactome" id="R-CEL-114608">
    <property type="pathway name" value="Platelet degranulation"/>
</dbReference>
<dbReference type="Reactome" id="R-CEL-6798695">
    <property type="pathway name" value="Neutrophil degranulation"/>
</dbReference>
<dbReference type="Reactome" id="R-CEL-70171">
    <property type="pathway name" value="Glycolysis"/>
</dbReference>
<dbReference type="Reactome" id="R-CEL-70263">
    <property type="pathway name" value="Gluconeogenesis"/>
</dbReference>
<dbReference type="Reactome" id="R-CEL-70350">
    <property type="pathway name" value="Fructose catabolism"/>
</dbReference>
<dbReference type="UniPathway" id="UPA00109">
    <property type="reaction ID" value="UER00183"/>
</dbReference>
<dbReference type="PRO" id="PR:P54216"/>
<dbReference type="Proteomes" id="UP000001940">
    <property type="component" value="Chromosome III"/>
</dbReference>
<dbReference type="Bgee" id="WBGene00011474">
    <property type="expression patterns" value="Expressed in larva and 3 other cell types or tissues"/>
</dbReference>
<dbReference type="GO" id="GO:0005737">
    <property type="term" value="C:cytoplasm"/>
    <property type="evidence" value="ECO:0000250"/>
    <property type="project" value="WormBase"/>
</dbReference>
<dbReference type="GO" id="GO:0005829">
    <property type="term" value="C:cytosol"/>
    <property type="evidence" value="ECO:0000318"/>
    <property type="project" value="GO_Central"/>
</dbReference>
<dbReference type="GO" id="GO:0005783">
    <property type="term" value="C:endoplasmic reticulum"/>
    <property type="evidence" value="ECO:0007005"/>
    <property type="project" value="WormBase"/>
</dbReference>
<dbReference type="GO" id="GO:0000792">
    <property type="term" value="C:heterochromatin"/>
    <property type="evidence" value="ECO:0000250"/>
    <property type="project" value="WormBase"/>
</dbReference>
<dbReference type="GO" id="GO:0030017">
    <property type="term" value="C:sarcomere"/>
    <property type="evidence" value="ECO:0007005"/>
    <property type="project" value="WormBase"/>
</dbReference>
<dbReference type="GO" id="GO:0055120">
    <property type="term" value="C:striated muscle dense body"/>
    <property type="evidence" value="ECO:0007005"/>
    <property type="project" value="WormBase"/>
</dbReference>
<dbReference type="GO" id="GO:0004332">
    <property type="term" value="F:fructose-bisphosphate aldolase activity"/>
    <property type="evidence" value="ECO:0000314"/>
    <property type="project" value="UniProtKB"/>
</dbReference>
<dbReference type="GO" id="GO:0042802">
    <property type="term" value="F:identical protein binding"/>
    <property type="evidence" value="ECO:0000353"/>
    <property type="project" value="IntAct"/>
</dbReference>
<dbReference type="GO" id="GO:0030388">
    <property type="term" value="P:fructose 1,6-bisphosphate metabolic process"/>
    <property type="evidence" value="ECO:0000318"/>
    <property type="project" value="GO_Central"/>
</dbReference>
<dbReference type="GO" id="GO:0006096">
    <property type="term" value="P:glycolytic process"/>
    <property type="evidence" value="ECO:0000318"/>
    <property type="project" value="GO_Central"/>
</dbReference>
<dbReference type="CDD" id="cd00948">
    <property type="entry name" value="FBP_aldolase_I_a"/>
    <property type="match status" value="1"/>
</dbReference>
<dbReference type="FunFam" id="3.20.20.70:FF:000021">
    <property type="entry name" value="Fructose-bisphosphate aldolase"/>
    <property type="match status" value="1"/>
</dbReference>
<dbReference type="Gene3D" id="3.20.20.70">
    <property type="entry name" value="Aldolase class I"/>
    <property type="match status" value="1"/>
</dbReference>
<dbReference type="InterPro" id="IPR029768">
    <property type="entry name" value="Aldolase_I_AS"/>
</dbReference>
<dbReference type="InterPro" id="IPR013785">
    <property type="entry name" value="Aldolase_TIM"/>
</dbReference>
<dbReference type="InterPro" id="IPR000741">
    <property type="entry name" value="FBA_I"/>
</dbReference>
<dbReference type="NCBIfam" id="NF033379">
    <property type="entry name" value="FrucBisAld_I"/>
    <property type="match status" value="1"/>
</dbReference>
<dbReference type="PANTHER" id="PTHR11627">
    <property type="entry name" value="FRUCTOSE-BISPHOSPHATE ALDOLASE"/>
    <property type="match status" value="1"/>
</dbReference>
<dbReference type="Pfam" id="PF00274">
    <property type="entry name" value="Glycolytic"/>
    <property type="match status" value="1"/>
</dbReference>
<dbReference type="SUPFAM" id="SSF51569">
    <property type="entry name" value="Aldolase"/>
    <property type="match status" value="1"/>
</dbReference>
<dbReference type="PROSITE" id="PS00158">
    <property type="entry name" value="ALDOLASE_CLASS_I"/>
    <property type="match status" value="1"/>
</dbReference>
<comment type="function">
    <text evidence="2">May be involved in the metabolism of fructose-bisphosphate (beta-D-fructose 1,6-bisphosphate) and of fructose 1-phosphate.</text>
</comment>
<comment type="catalytic activity">
    <reaction evidence="2">
        <text>beta-D-fructose 1,6-bisphosphate = D-glyceraldehyde 3-phosphate + dihydroxyacetone phosphate</text>
        <dbReference type="Rhea" id="RHEA:14729"/>
        <dbReference type="ChEBI" id="CHEBI:32966"/>
        <dbReference type="ChEBI" id="CHEBI:57642"/>
        <dbReference type="ChEBI" id="CHEBI:59776"/>
        <dbReference type="EC" id="4.1.2.13"/>
    </reaction>
    <physiologicalReaction direction="left-to-right" evidence="2">
        <dbReference type="Rhea" id="RHEA:14730"/>
    </physiologicalReaction>
</comment>
<comment type="biophysicochemical properties">
    <kinetics>
        <KM evidence="2">16.7 uM for beta-D-fructose 1,6-bisphosphate</KM>
        <KM evidence="2">0.56 mM for fructose 1-phosphate</KM>
    </kinetics>
</comment>
<comment type="pathway">
    <text>Carbohydrate degradation; glycolysis; D-glyceraldehyde 3-phosphate and glycerone phosphate from D-glucose: step 4/4.</text>
</comment>
<comment type="interaction">
    <interactant intactId="EBI-327260">
        <id>P54216</id>
    </interactant>
    <interactant intactId="EBI-327260">
        <id>P54216</id>
        <label>aldo-1</label>
    </interactant>
    <organismsDiffer>false</organismsDiffer>
    <experiments>3</experiments>
</comment>
<comment type="tissue specificity">
    <text>Ubiquitous.</text>
</comment>
<comment type="developmental stage">
    <text>All stages of development.</text>
</comment>
<comment type="similarity">
    <text evidence="4">Belongs to the class I fructose-bisphosphate aldolase family.</text>
</comment>